<protein>
    <recommendedName>
        <fullName>Uncharacterized protein y4iK</fullName>
    </recommendedName>
</protein>
<gene>
    <name type="ordered locus">NGR_a03220</name>
    <name type="ORF">y4iK</name>
</gene>
<evidence type="ECO:0000256" key="1">
    <source>
        <dbReference type="SAM" id="MobiDB-lite"/>
    </source>
</evidence>
<reference key="1">
    <citation type="journal article" date="1997" name="Nature">
        <title>Molecular basis of symbiosis between Rhizobium and legumes.</title>
        <authorList>
            <person name="Freiberg C.A."/>
            <person name="Fellay R."/>
            <person name="Bairoch A."/>
            <person name="Broughton W.J."/>
            <person name="Rosenthal A."/>
            <person name="Perret X."/>
        </authorList>
    </citation>
    <scope>NUCLEOTIDE SEQUENCE [LARGE SCALE GENOMIC DNA]</scope>
    <source>
        <strain>NBRC 101917 / NGR234</strain>
    </source>
</reference>
<reference key="2">
    <citation type="journal article" date="2009" name="Appl. Environ. Microbiol.">
        <title>Rhizobium sp. strain NGR234 possesses a remarkable number of secretion systems.</title>
        <authorList>
            <person name="Schmeisser C."/>
            <person name="Liesegang H."/>
            <person name="Krysciak D."/>
            <person name="Bakkou N."/>
            <person name="Le Quere A."/>
            <person name="Wollherr A."/>
            <person name="Heinemeyer I."/>
            <person name="Morgenstern B."/>
            <person name="Pommerening-Roeser A."/>
            <person name="Flores M."/>
            <person name="Palacios R."/>
            <person name="Brenner S."/>
            <person name="Gottschalk G."/>
            <person name="Schmitz R.A."/>
            <person name="Broughton W.J."/>
            <person name="Perret X."/>
            <person name="Strittmatter A.W."/>
            <person name="Streit W.R."/>
        </authorList>
    </citation>
    <scope>NUCLEOTIDE SEQUENCE [LARGE SCALE GENOMIC DNA]</scope>
    <source>
        <strain>NBRC 101917 / NGR234</strain>
    </source>
</reference>
<organism>
    <name type="scientific">Sinorhizobium fredii (strain NBRC 101917 / NGR234)</name>
    <dbReference type="NCBI Taxonomy" id="394"/>
    <lineage>
        <taxon>Bacteria</taxon>
        <taxon>Pseudomonadati</taxon>
        <taxon>Pseudomonadota</taxon>
        <taxon>Alphaproteobacteria</taxon>
        <taxon>Hyphomicrobiales</taxon>
        <taxon>Rhizobiaceae</taxon>
        <taxon>Sinorhizobium/Ensifer group</taxon>
        <taxon>Sinorhizobium</taxon>
    </lineage>
</organism>
<keyword id="KW-0614">Plasmid</keyword>
<keyword id="KW-1185">Reference proteome</keyword>
<accession>P55494</accession>
<proteinExistence type="predicted"/>
<name>Y4IK_SINFN</name>
<geneLocation type="plasmid">
    <name>sym pNGR234a</name>
</geneLocation>
<feature type="chain" id="PRO_0000200863" description="Uncharacterized protein y4iK">
    <location>
        <begin position="1"/>
        <end position="232"/>
    </location>
</feature>
<feature type="region of interest" description="Disordered" evidence="1">
    <location>
        <begin position="86"/>
        <end position="107"/>
    </location>
</feature>
<feature type="compositionally biased region" description="Basic and acidic residues" evidence="1">
    <location>
        <begin position="86"/>
        <end position="95"/>
    </location>
</feature>
<dbReference type="EMBL" id="U00090">
    <property type="protein sequence ID" value="AAB91706.1"/>
    <property type="molecule type" value="Genomic_DNA"/>
</dbReference>
<dbReference type="RefSeq" id="NP_443904.1">
    <property type="nucleotide sequence ID" value="NC_000914.2"/>
</dbReference>
<dbReference type="RefSeq" id="WP_010875338.1">
    <property type="nucleotide sequence ID" value="NC_000914.2"/>
</dbReference>
<dbReference type="SMR" id="P55494"/>
<dbReference type="KEGG" id="rhi:NGR_a03220"/>
<dbReference type="PATRIC" id="fig|394.7.peg.332"/>
<dbReference type="eggNOG" id="COG0753">
    <property type="taxonomic scope" value="Bacteria"/>
</dbReference>
<dbReference type="HOGENOM" id="CLU_1194116_0_0_5"/>
<dbReference type="OrthoDB" id="8420746at2"/>
<dbReference type="Proteomes" id="UP000001054">
    <property type="component" value="Plasmid pNGR234a"/>
</dbReference>
<dbReference type="GO" id="GO:0020037">
    <property type="term" value="F:heme binding"/>
    <property type="evidence" value="ECO:0007669"/>
    <property type="project" value="InterPro"/>
</dbReference>
<dbReference type="Gene3D" id="2.40.180.10">
    <property type="entry name" value="Catalase core domain"/>
    <property type="match status" value="1"/>
</dbReference>
<dbReference type="InterPro" id="IPR020835">
    <property type="entry name" value="Catalase_sf"/>
</dbReference>
<dbReference type="SUPFAM" id="SSF56634">
    <property type="entry name" value="Heme-dependent catalase-like"/>
    <property type="match status" value="1"/>
</dbReference>
<sequence length="232" mass="26804">MNAGRQLFVRSIRDFSTFVHTPDAERIKLVESGLMLDDQLREAYRIRGSFTDSRYHTWVCFEFIDKTGVSRYVRFRLINADRGPDRGLPRPEFKANGHPSMDAEADDDRAPDFLRKDFIHRVRHSDVRYILQAQLRDTPPPPVGNHELFDPSQPWNEYWFPWVDMFEIRLNEVIDDQAAVSRLEMNPNRSPECIRIPLATSPDDYASLGHARAIVYPGARAARAAVPPPQNN</sequence>